<protein>
    <recommendedName>
        <fullName evidence="1">Small ribosomal subunit protein uS10</fullName>
    </recommendedName>
    <alternativeName>
        <fullName evidence="2">30S ribosomal protein S10</fullName>
    </alternativeName>
</protein>
<dbReference type="EMBL" id="CP000786">
    <property type="protein sequence ID" value="ABZ98068.1"/>
    <property type="molecule type" value="Genomic_DNA"/>
</dbReference>
<dbReference type="RefSeq" id="WP_002974412.1">
    <property type="nucleotide sequence ID" value="NC_010602.1"/>
</dbReference>
<dbReference type="SMR" id="B0SSH8"/>
<dbReference type="STRING" id="456481.LEPBI_I1965"/>
<dbReference type="GeneID" id="93343078"/>
<dbReference type="KEGG" id="lbi:LEPBI_I1965"/>
<dbReference type="HOGENOM" id="CLU_122625_1_3_12"/>
<dbReference type="OrthoDB" id="9804464at2"/>
<dbReference type="BioCyc" id="LBIF456481:LEPBI_RS09710-MONOMER"/>
<dbReference type="Proteomes" id="UP000001847">
    <property type="component" value="Chromosome I"/>
</dbReference>
<dbReference type="GO" id="GO:1990904">
    <property type="term" value="C:ribonucleoprotein complex"/>
    <property type="evidence" value="ECO:0007669"/>
    <property type="project" value="UniProtKB-KW"/>
</dbReference>
<dbReference type="GO" id="GO:0005840">
    <property type="term" value="C:ribosome"/>
    <property type="evidence" value="ECO:0007669"/>
    <property type="project" value="UniProtKB-KW"/>
</dbReference>
<dbReference type="GO" id="GO:0003735">
    <property type="term" value="F:structural constituent of ribosome"/>
    <property type="evidence" value="ECO:0007669"/>
    <property type="project" value="InterPro"/>
</dbReference>
<dbReference type="GO" id="GO:0000049">
    <property type="term" value="F:tRNA binding"/>
    <property type="evidence" value="ECO:0007669"/>
    <property type="project" value="UniProtKB-UniRule"/>
</dbReference>
<dbReference type="GO" id="GO:0006412">
    <property type="term" value="P:translation"/>
    <property type="evidence" value="ECO:0007669"/>
    <property type="project" value="UniProtKB-UniRule"/>
</dbReference>
<dbReference type="FunFam" id="3.30.70.600:FF:000001">
    <property type="entry name" value="30S ribosomal protein S10"/>
    <property type="match status" value="1"/>
</dbReference>
<dbReference type="Gene3D" id="3.30.70.600">
    <property type="entry name" value="Ribosomal protein S10 domain"/>
    <property type="match status" value="1"/>
</dbReference>
<dbReference type="HAMAP" id="MF_00508">
    <property type="entry name" value="Ribosomal_uS10"/>
    <property type="match status" value="1"/>
</dbReference>
<dbReference type="InterPro" id="IPR001848">
    <property type="entry name" value="Ribosomal_uS10"/>
</dbReference>
<dbReference type="InterPro" id="IPR018268">
    <property type="entry name" value="Ribosomal_uS10_CS"/>
</dbReference>
<dbReference type="InterPro" id="IPR027486">
    <property type="entry name" value="Ribosomal_uS10_dom"/>
</dbReference>
<dbReference type="InterPro" id="IPR036838">
    <property type="entry name" value="Ribosomal_uS10_dom_sf"/>
</dbReference>
<dbReference type="NCBIfam" id="NF001861">
    <property type="entry name" value="PRK00596.1"/>
    <property type="match status" value="1"/>
</dbReference>
<dbReference type="NCBIfam" id="TIGR01049">
    <property type="entry name" value="rpsJ_bact"/>
    <property type="match status" value="1"/>
</dbReference>
<dbReference type="PANTHER" id="PTHR11700">
    <property type="entry name" value="30S RIBOSOMAL PROTEIN S10 FAMILY MEMBER"/>
    <property type="match status" value="1"/>
</dbReference>
<dbReference type="Pfam" id="PF00338">
    <property type="entry name" value="Ribosomal_S10"/>
    <property type="match status" value="1"/>
</dbReference>
<dbReference type="PRINTS" id="PR00971">
    <property type="entry name" value="RIBOSOMALS10"/>
</dbReference>
<dbReference type="SMART" id="SM01403">
    <property type="entry name" value="Ribosomal_S10"/>
    <property type="match status" value="1"/>
</dbReference>
<dbReference type="SUPFAM" id="SSF54999">
    <property type="entry name" value="Ribosomal protein S10"/>
    <property type="match status" value="1"/>
</dbReference>
<dbReference type="PROSITE" id="PS00361">
    <property type="entry name" value="RIBOSOMAL_S10"/>
    <property type="match status" value="1"/>
</dbReference>
<organism>
    <name type="scientific">Leptospira biflexa serovar Patoc (strain Patoc 1 / ATCC 23582 / Paris)</name>
    <dbReference type="NCBI Taxonomy" id="456481"/>
    <lineage>
        <taxon>Bacteria</taxon>
        <taxon>Pseudomonadati</taxon>
        <taxon>Spirochaetota</taxon>
        <taxon>Spirochaetia</taxon>
        <taxon>Leptospirales</taxon>
        <taxon>Leptospiraceae</taxon>
        <taxon>Leptospira</taxon>
    </lineage>
</organism>
<name>RS10_LEPBP</name>
<gene>
    <name evidence="1" type="primary">rpsJ</name>
    <name type="ordered locus">LEPBI_I1965</name>
</gene>
<sequence>MAGQRIRVKLKAFDHRLIDQSTFEIVATAKRTGATVSGPIPLPTKKEIYTVLRSPHVNKKAREQFEMRTHKRLIDILNTNEDTVEALMKLQLPAGVSVDIKS</sequence>
<keyword id="KW-1185">Reference proteome</keyword>
<keyword id="KW-0687">Ribonucleoprotein</keyword>
<keyword id="KW-0689">Ribosomal protein</keyword>
<comment type="function">
    <text evidence="1">Involved in the binding of tRNA to the ribosomes.</text>
</comment>
<comment type="subunit">
    <text evidence="1">Part of the 30S ribosomal subunit.</text>
</comment>
<comment type="similarity">
    <text evidence="1">Belongs to the universal ribosomal protein uS10 family.</text>
</comment>
<feature type="chain" id="PRO_1000127145" description="Small ribosomal subunit protein uS10">
    <location>
        <begin position="1"/>
        <end position="102"/>
    </location>
</feature>
<evidence type="ECO:0000255" key="1">
    <source>
        <dbReference type="HAMAP-Rule" id="MF_00508"/>
    </source>
</evidence>
<evidence type="ECO:0000305" key="2"/>
<accession>B0SSH8</accession>
<proteinExistence type="inferred from homology"/>
<reference key="1">
    <citation type="journal article" date="2008" name="PLoS ONE">
        <title>Genome sequence of the saprophyte Leptospira biflexa provides insights into the evolution of Leptospira and the pathogenesis of leptospirosis.</title>
        <authorList>
            <person name="Picardeau M."/>
            <person name="Bulach D.M."/>
            <person name="Bouchier C."/>
            <person name="Zuerner R.L."/>
            <person name="Zidane N."/>
            <person name="Wilson P.J."/>
            <person name="Creno S."/>
            <person name="Kuczek E.S."/>
            <person name="Bommezzadri S."/>
            <person name="Davis J.C."/>
            <person name="McGrath A."/>
            <person name="Johnson M.J."/>
            <person name="Boursaux-Eude C."/>
            <person name="Seemann T."/>
            <person name="Rouy Z."/>
            <person name="Coppel R.L."/>
            <person name="Rood J.I."/>
            <person name="Lajus A."/>
            <person name="Davies J.K."/>
            <person name="Medigue C."/>
            <person name="Adler B."/>
        </authorList>
    </citation>
    <scope>NUCLEOTIDE SEQUENCE [LARGE SCALE GENOMIC DNA]</scope>
    <source>
        <strain>Patoc 1 / ATCC 23582 / Paris</strain>
    </source>
</reference>